<reference key="1">
    <citation type="journal article" date="2010" name="Genome Biol. Evol.">
        <title>Continuing evolution of Burkholderia mallei through genome reduction and large-scale rearrangements.</title>
        <authorList>
            <person name="Losada L."/>
            <person name="Ronning C.M."/>
            <person name="DeShazer D."/>
            <person name="Woods D."/>
            <person name="Fedorova N."/>
            <person name="Kim H.S."/>
            <person name="Shabalina S.A."/>
            <person name="Pearson T.R."/>
            <person name="Brinkac L."/>
            <person name="Tan P."/>
            <person name="Nandi T."/>
            <person name="Crabtree J."/>
            <person name="Badger J."/>
            <person name="Beckstrom-Sternberg S."/>
            <person name="Saqib M."/>
            <person name="Schutzer S.E."/>
            <person name="Keim P."/>
            <person name="Nierman W.C."/>
        </authorList>
    </citation>
    <scope>NUCLEOTIDE SEQUENCE [LARGE SCALE GENOMIC DNA]</scope>
    <source>
        <strain>1106a</strain>
    </source>
</reference>
<name>KCY_BURP0</name>
<protein>
    <recommendedName>
        <fullName evidence="1">Cytidylate kinase</fullName>
        <shortName evidence="1">CK</shortName>
        <ecNumber evidence="1">2.7.4.25</ecNumber>
    </recommendedName>
    <alternativeName>
        <fullName evidence="1">Cytidine monophosphate kinase</fullName>
        <shortName evidence="1">CMP kinase</shortName>
    </alternativeName>
</protein>
<gene>
    <name evidence="1" type="primary">cmk</name>
    <name type="ordered locus">BURPS1106A_2946</name>
</gene>
<accession>A3NXX0</accession>
<comment type="catalytic activity">
    <reaction evidence="1">
        <text>CMP + ATP = CDP + ADP</text>
        <dbReference type="Rhea" id="RHEA:11600"/>
        <dbReference type="ChEBI" id="CHEBI:30616"/>
        <dbReference type="ChEBI" id="CHEBI:58069"/>
        <dbReference type="ChEBI" id="CHEBI:60377"/>
        <dbReference type="ChEBI" id="CHEBI:456216"/>
        <dbReference type="EC" id="2.7.4.25"/>
    </reaction>
</comment>
<comment type="catalytic activity">
    <reaction evidence="1">
        <text>dCMP + ATP = dCDP + ADP</text>
        <dbReference type="Rhea" id="RHEA:25094"/>
        <dbReference type="ChEBI" id="CHEBI:30616"/>
        <dbReference type="ChEBI" id="CHEBI:57566"/>
        <dbReference type="ChEBI" id="CHEBI:58593"/>
        <dbReference type="ChEBI" id="CHEBI:456216"/>
        <dbReference type="EC" id="2.7.4.25"/>
    </reaction>
</comment>
<comment type="subcellular location">
    <subcellularLocation>
        <location evidence="1">Cytoplasm</location>
    </subcellularLocation>
</comment>
<comment type="similarity">
    <text evidence="1">Belongs to the cytidylate kinase family. Type 1 subfamily.</text>
</comment>
<keyword id="KW-0067">ATP-binding</keyword>
<keyword id="KW-0963">Cytoplasm</keyword>
<keyword id="KW-0418">Kinase</keyword>
<keyword id="KW-0547">Nucleotide-binding</keyword>
<keyword id="KW-0808">Transferase</keyword>
<sequence>MKSTRPFHPTPVITIDGPTASGKGTVAALVAAHLGFHLLDSGALYRLAALASIRYQVEPDDADALASLVDGLHITFREGCAQLDGVDVSDEIRAEAVGNRASAIAVHASVRAALVARQRAFRKTPGLVADGRDMGTVIFPDAVLKVFLTASVEARAARRHKQLMQKGFSANMDNLLQDLRERDARDSNRAAAPLKPAADAKPLDTSALTIEQSVEQVLAWYRELGQPA</sequence>
<dbReference type="EC" id="2.7.4.25" evidence="1"/>
<dbReference type="EMBL" id="CP000572">
    <property type="protein sequence ID" value="ABN90778.1"/>
    <property type="molecule type" value="Genomic_DNA"/>
</dbReference>
<dbReference type="RefSeq" id="WP_004532324.1">
    <property type="nucleotide sequence ID" value="NC_009076.1"/>
</dbReference>
<dbReference type="SMR" id="A3NXX0"/>
<dbReference type="GeneID" id="93061103"/>
<dbReference type="KEGG" id="bpl:BURPS1106A_2946"/>
<dbReference type="HOGENOM" id="CLU_079959_2_0_4"/>
<dbReference type="Proteomes" id="UP000006738">
    <property type="component" value="Chromosome I"/>
</dbReference>
<dbReference type="GO" id="GO:0005829">
    <property type="term" value="C:cytosol"/>
    <property type="evidence" value="ECO:0007669"/>
    <property type="project" value="TreeGrafter"/>
</dbReference>
<dbReference type="GO" id="GO:0005524">
    <property type="term" value="F:ATP binding"/>
    <property type="evidence" value="ECO:0007669"/>
    <property type="project" value="UniProtKB-UniRule"/>
</dbReference>
<dbReference type="GO" id="GO:0036430">
    <property type="term" value="F:CMP kinase activity"/>
    <property type="evidence" value="ECO:0007669"/>
    <property type="project" value="RHEA"/>
</dbReference>
<dbReference type="GO" id="GO:0036431">
    <property type="term" value="F:dCMP kinase activity"/>
    <property type="evidence" value="ECO:0007669"/>
    <property type="project" value="RHEA"/>
</dbReference>
<dbReference type="GO" id="GO:0015949">
    <property type="term" value="P:nucleobase-containing small molecule interconversion"/>
    <property type="evidence" value="ECO:0007669"/>
    <property type="project" value="TreeGrafter"/>
</dbReference>
<dbReference type="GO" id="GO:0006220">
    <property type="term" value="P:pyrimidine nucleotide metabolic process"/>
    <property type="evidence" value="ECO:0007669"/>
    <property type="project" value="UniProtKB-UniRule"/>
</dbReference>
<dbReference type="CDD" id="cd02020">
    <property type="entry name" value="CMPK"/>
    <property type="match status" value="1"/>
</dbReference>
<dbReference type="Gene3D" id="3.40.50.300">
    <property type="entry name" value="P-loop containing nucleotide triphosphate hydrolases"/>
    <property type="match status" value="1"/>
</dbReference>
<dbReference type="HAMAP" id="MF_00238">
    <property type="entry name" value="Cytidyl_kinase_type1"/>
    <property type="match status" value="1"/>
</dbReference>
<dbReference type="InterPro" id="IPR003136">
    <property type="entry name" value="Cytidylate_kin"/>
</dbReference>
<dbReference type="InterPro" id="IPR011994">
    <property type="entry name" value="Cytidylate_kinase_dom"/>
</dbReference>
<dbReference type="InterPro" id="IPR027417">
    <property type="entry name" value="P-loop_NTPase"/>
</dbReference>
<dbReference type="NCBIfam" id="TIGR00017">
    <property type="entry name" value="cmk"/>
    <property type="match status" value="1"/>
</dbReference>
<dbReference type="PANTHER" id="PTHR21299:SF2">
    <property type="entry name" value="CYTIDYLATE KINASE"/>
    <property type="match status" value="1"/>
</dbReference>
<dbReference type="PANTHER" id="PTHR21299">
    <property type="entry name" value="CYTIDYLATE KINASE/PANTOATE-BETA-ALANINE LIGASE"/>
    <property type="match status" value="1"/>
</dbReference>
<dbReference type="Pfam" id="PF02224">
    <property type="entry name" value="Cytidylate_kin"/>
    <property type="match status" value="1"/>
</dbReference>
<dbReference type="SUPFAM" id="SSF52540">
    <property type="entry name" value="P-loop containing nucleoside triphosphate hydrolases"/>
    <property type="match status" value="1"/>
</dbReference>
<evidence type="ECO:0000255" key="1">
    <source>
        <dbReference type="HAMAP-Rule" id="MF_00238"/>
    </source>
</evidence>
<organism>
    <name type="scientific">Burkholderia pseudomallei (strain 1106a)</name>
    <dbReference type="NCBI Taxonomy" id="357348"/>
    <lineage>
        <taxon>Bacteria</taxon>
        <taxon>Pseudomonadati</taxon>
        <taxon>Pseudomonadota</taxon>
        <taxon>Betaproteobacteria</taxon>
        <taxon>Burkholderiales</taxon>
        <taxon>Burkholderiaceae</taxon>
        <taxon>Burkholderia</taxon>
        <taxon>pseudomallei group</taxon>
    </lineage>
</organism>
<proteinExistence type="inferred from homology"/>
<feature type="chain" id="PRO_1000048199" description="Cytidylate kinase">
    <location>
        <begin position="1"/>
        <end position="228"/>
    </location>
</feature>
<feature type="binding site" evidence="1">
    <location>
        <begin position="17"/>
        <end position="25"/>
    </location>
    <ligand>
        <name>ATP</name>
        <dbReference type="ChEBI" id="CHEBI:30616"/>
    </ligand>
</feature>